<organism>
    <name type="scientific">Fragaria ananassa</name>
    <name type="common">Strawberry</name>
    <name type="synonym">Fragaria chiloensis x Fragaria virginiana</name>
    <dbReference type="NCBI Taxonomy" id="3747"/>
    <lineage>
        <taxon>Eukaryota</taxon>
        <taxon>Viridiplantae</taxon>
        <taxon>Streptophyta</taxon>
        <taxon>Embryophyta</taxon>
        <taxon>Tracheophyta</taxon>
        <taxon>Spermatophyta</taxon>
        <taxon>Magnoliopsida</taxon>
        <taxon>eudicotyledons</taxon>
        <taxon>Gunneridae</taxon>
        <taxon>Pentapetalae</taxon>
        <taxon>rosids</taxon>
        <taxon>fabids</taxon>
        <taxon>Rosales</taxon>
        <taxon>Rosaceae</taxon>
        <taxon>Rosoideae</taxon>
        <taxon>Potentilleae</taxon>
        <taxon>Fragariinae</taxon>
        <taxon>Fragaria</taxon>
    </lineage>
</organism>
<protein>
    <recommendedName>
        <fullName evidence="1">Putative UDP-glucose flavonoid 3-O-glucosyltransferase 3</fullName>
        <shortName evidence="4">FaGT3</shortName>
        <ecNumber evidence="1">2.4.1.-</ecNumber>
    </recommendedName>
    <alternativeName>
        <fullName evidence="1">Flavonol 3-O-glucosyltransferase 3</fullName>
    </alternativeName>
</protein>
<sequence>MEKPAELVLIPSPGIGHLVSTLEIAKLLVSRDDKLFITVLIMHFPAVSKGTDAYVQSLADSSSPISQRINFINLPHTNMDHTEGSVRNSLVGFVESQQPHVKDAVANLRDSKTTRLAGFVVDMFCTTMINVANQLGVPSYVFFTSGAATLGLLFHLQELRDQYNKDCTEFKDSDAELIIPSFFNPLPAKVLPGRMLVKDSAEPFLNVIKRFRETKGILVNTFTDLESHALHALSSDAEIPPVYPVGPLLNLNSNESRVDSDEVKKKNDILKWLDDQPPLSVVFLCFGSMGSFDESQVREIANALEHAGHRFLWSLRRSPPTGKVAFPSDYDDHTGVLPEGFLDRTGGIGKVIGWAPQVAVLAHPSVGGFVSHCGWNSTLESLWHGVPVATWPLYAEQQLNAFQPVKELELAVEIDMSYRSKSPVLVSAKEIERGIREVMELDSSDIRKRVKEMSEKGKKALMDGGSSYTSLGHFIDQI</sequence>
<evidence type="ECO:0000250" key="1">
    <source>
        <dbReference type="UniProtKB" id="Q2V6K0"/>
    </source>
</evidence>
<evidence type="ECO:0000255" key="2"/>
<evidence type="ECO:0000269" key="3">
    <source>
    </source>
</evidence>
<evidence type="ECO:0000303" key="4">
    <source>
    </source>
</evidence>
<evidence type="ECO:0000312" key="5">
    <source>
        <dbReference type="EMBL" id="AAU09444.1"/>
    </source>
</evidence>
<name>UFOG3_FRAAN</name>
<comment type="similarity">
    <text evidence="2">Belongs to the UDP-glycosyltransferase family.</text>
</comment>
<proteinExistence type="evidence at transcript level"/>
<dbReference type="EC" id="2.4.1.-" evidence="1"/>
<dbReference type="EMBL" id="AY663786">
    <property type="protein sequence ID" value="AAU09444.1"/>
    <property type="molecule type" value="mRNA"/>
</dbReference>
<dbReference type="SMR" id="Q66PF3"/>
<dbReference type="CAZy" id="GT1">
    <property type="family name" value="Glycosyltransferase Family 1"/>
</dbReference>
<dbReference type="GO" id="GO:0035251">
    <property type="term" value="F:UDP-glucosyltransferase activity"/>
    <property type="evidence" value="ECO:0007669"/>
    <property type="project" value="InterPro"/>
</dbReference>
<dbReference type="CDD" id="cd03784">
    <property type="entry name" value="GT1_Gtf-like"/>
    <property type="match status" value="1"/>
</dbReference>
<dbReference type="FunFam" id="3.40.50.2000:FF:000056">
    <property type="entry name" value="Glycosyltransferase"/>
    <property type="match status" value="1"/>
</dbReference>
<dbReference type="FunFam" id="3.40.50.2000:FF:000080">
    <property type="entry name" value="Glycosyltransferase"/>
    <property type="match status" value="1"/>
</dbReference>
<dbReference type="Gene3D" id="3.40.50.2000">
    <property type="entry name" value="Glycogen Phosphorylase B"/>
    <property type="match status" value="2"/>
</dbReference>
<dbReference type="InterPro" id="IPR050481">
    <property type="entry name" value="UDP-glycosyltransf_plant"/>
</dbReference>
<dbReference type="InterPro" id="IPR002213">
    <property type="entry name" value="UDP_glucos_trans"/>
</dbReference>
<dbReference type="InterPro" id="IPR035595">
    <property type="entry name" value="UDP_glycos_trans_CS"/>
</dbReference>
<dbReference type="PANTHER" id="PTHR48048">
    <property type="entry name" value="GLYCOSYLTRANSFERASE"/>
    <property type="match status" value="1"/>
</dbReference>
<dbReference type="PANTHER" id="PTHR48048:SF45">
    <property type="entry name" value="GLYCOSYLTRANSFERASE"/>
    <property type="match status" value="1"/>
</dbReference>
<dbReference type="Pfam" id="PF00201">
    <property type="entry name" value="UDPGT"/>
    <property type="match status" value="1"/>
</dbReference>
<dbReference type="SUPFAM" id="SSF53756">
    <property type="entry name" value="UDP-Glycosyltransferase/glycogen phosphorylase"/>
    <property type="match status" value="1"/>
</dbReference>
<dbReference type="PROSITE" id="PS00375">
    <property type="entry name" value="UDPGT"/>
    <property type="match status" value="1"/>
</dbReference>
<reference evidence="5" key="1">
    <citation type="journal article" date="2006" name="Plant Physiol.">
        <title>Cinnamate metabolism in ripening fruit. Characterization of a UDP-glucose:cinnamate glucosyltransferase from strawberry.</title>
        <authorList>
            <person name="Lunkenbein S."/>
            <person name="Bellido M."/>
            <person name="Aharoni A."/>
            <person name="Salentijn E.M."/>
            <person name="Kaldenhoff R."/>
            <person name="Coiner H.A."/>
            <person name="Munoz-Blanco J."/>
            <person name="Schwab W."/>
        </authorList>
    </citation>
    <scope>NUCLEOTIDE SEQUENCE [MRNA]</scope>
    <source>
        <strain evidence="3">cv. Elsanta</strain>
    </source>
</reference>
<keyword id="KW-0328">Glycosyltransferase</keyword>
<keyword id="KW-0808">Transferase</keyword>
<feature type="chain" id="PRO_0000413768" description="Putative UDP-glucose flavonoid 3-O-glucosyltransferase 3">
    <location>
        <begin position="1"/>
        <end position="478"/>
    </location>
</feature>
<accession>Q66PF3</accession>
<gene>
    <name evidence="5" type="primary">GT3</name>
</gene>